<reference key="1">
    <citation type="journal article" date="2010" name="Appl. Environ. Microbiol.">
        <title>The genome sequence of Psychrobacter arcticus 273-4, a psychroactive Siberian permafrost bacterium, reveals mechanisms for adaptation to low-temperature growth.</title>
        <authorList>
            <person name="Ayala-del-Rio H.L."/>
            <person name="Chain P.S."/>
            <person name="Grzymski J.J."/>
            <person name="Ponder M.A."/>
            <person name="Ivanova N."/>
            <person name="Bergholz P.W."/>
            <person name="Di Bartolo G."/>
            <person name="Hauser L."/>
            <person name="Land M."/>
            <person name="Bakermans C."/>
            <person name="Rodrigues D."/>
            <person name="Klappenbach J."/>
            <person name="Zarka D."/>
            <person name="Larimer F."/>
            <person name="Richardson P."/>
            <person name="Murray A."/>
            <person name="Thomashow M."/>
            <person name="Tiedje J.M."/>
        </authorList>
    </citation>
    <scope>NUCLEOTIDE SEQUENCE [LARGE SCALE GENOMIC DNA]</scope>
    <source>
        <strain>DSM 17307 / VKM B-2377 / 273-4</strain>
    </source>
</reference>
<sequence length="377" mass="41608">MKNLTIVADSNIASLDEFFNPIALGQNTEQQVQVIRVAGRDINAQLLADLQPDVLLIRSVTQIDQALLANNNSVKFVGSATIGTDHVDQDYLAERNITFANATGCSKHSVAQYVVSAILTLRPQYWAQSMTPLTLGIIGLGNIGSTLAQYASDLGWQVLGYDPLLATSDINNASLEQVLCQSDIVSLHVPLTDKKDTDTQGAMSISNNFSDYPTRHLINAETLARMSPHTMLINSARGPVIDAAALEADIDATERQVVLDVFEHEPQIAESLLSKLAIATPHIAGYTLEGKLRGTQIIYDALCEKLAVLPVLSMHQLLPLNTYLWSELKENPDRLLKFYDIKKDDTALRNKITSGQVKGSDFDQLRRDYHLRREWQA</sequence>
<organism>
    <name type="scientific">Psychrobacter arcticus (strain DSM 17307 / VKM B-2377 / 273-4)</name>
    <dbReference type="NCBI Taxonomy" id="259536"/>
    <lineage>
        <taxon>Bacteria</taxon>
        <taxon>Pseudomonadati</taxon>
        <taxon>Pseudomonadota</taxon>
        <taxon>Gammaproteobacteria</taxon>
        <taxon>Moraxellales</taxon>
        <taxon>Moraxellaceae</taxon>
        <taxon>Psychrobacter</taxon>
    </lineage>
</organism>
<accession>Q4FV16</accession>
<name>PDXB_PSYA2</name>
<evidence type="ECO:0000255" key="1">
    <source>
        <dbReference type="HAMAP-Rule" id="MF_01825"/>
    </source>
</evidence>
<evidence type="ECO:0000305" key="2"/>
<dbReference type="EC" id="1.1.1.290" evidence="1"/>
<dbReference type="EMBL" id="CP000082">
    <property type="protein sequence ID" value="AAZ18142.1"/>
    <property type="status" value="ALT_INIT"/>
    <property type="molecule type" value="Genomic_DNA"/>
</dbReference>
<dbReference type="RefSeq" id="WP_041757862.1">
    <property type="nucleotide sequence ID" value="NC_007204.1"/>
</dbReference>
<dbReference type="SMR" id="Q4FV16"/>
<dbReference type="STRING" id="259536.Psyc_0272"/>
<dbReference type="KEGG" id="par:Psyc_0272"/>
<dbReference type="eggNOG" id="COG0111">
    <property type="taxonomic scope" value="Bacteria"/>
</dbReference>
<dbReference type="HOGENOM" id="CLU_019796_4_0_6"/>
<dbReference type="OrthoDB" id="9770208at2"/>
<dbReference type="UniPathway" id="UPA00244">
    <property type="reaction ID" value="UER00310"/>
</dbReference>
<dbReference type="Proteomes" id="UP000000546">
    <property type="component" value="Chromosome"/>
</dbReference>
<dbReference type="GO" id="GO:0005737">
    <property type="term" value="C:cytoplasm"/>
    <property type="evidence" value="ECO:0007669"/>
    <property type="project" value="UniProtKB-SubCell"/>
</dbReference>
<dbReference type="GO" id="GO:0033711">
    <property type="term" value="F:4-phosphoerythronate dehydrogenase activity"/>
    <property type="evidence" value="ECO:0007669"/>
    <property type="project" value="UniProtKB-EC"/>
</dbReference>
<dbReference type="GO" id="GO:0051287">
    <property type="term" value="F:NAD binding"/>
    <property type="evidence" value="ECO:0007669"/>
    <property type="project" value="InterPro"/>
</dbReference>
<dbReference type="GO" id="GO:0046983">
    <property type="term" value="F:protein dimerization activity"/>
    <property type="evidence" value="ECO:0007669"/>
    <property type="project" value="InterPro"/>
</dbReference>
<dbReference type="GO" id="GO:0008615">
    <property type="term" value="P:pyridoxine biosynthetic process"/>
    <property type="evidence" value="ECO:0007669"/>
    <property type="project" value="UniProtKB-UniRule"/>
</dbReference>
<dbReference type="CDD" id="cd12158">
    <property type="entry name" value="ErythrP_dh"/>
    <property type="match status" value="1"/>
</dbReference>
<dbReference type="Gene3D" id="3.30.1370.170">
    <property type="match status" value="1"/>
</dbReference>
<dbReference type="Gene3D" id="3.40.50.720">
    <property type="entry name" value="NAD(P)-binding Rossmann-like Domain"/>
    <property type="match status" value="2"/>
</dbReference>
<dbReference type="HAMAP" id="MF_01825">
    <property type="entry name" value="PdxB"/>
    <property type="match status" value="1"/>
</dbReference>
<dbReference type="InterPro" id="IPR050418">
    <property type="entry name" value="D-iso_2-hydroxyacid_DH_PdxB"/>
</dbReference>
<dbReference type="InterPro" id="IPR006139">
    <property type="entry name" value="D-isomer_2_OHA_DH_cat_dom"/>
</dbReference>
<dbReference type="InterPro" id="IPR029752">
    <property type="entry name" value="D-isomer_DH_CS1"/>
</dbReference>
<dbReference type="InterPro" id="IPR006140">
    <property type="entry name" value="D-isomer_DH_NAD-bd"/>
</dbReference>
<dbReference type="InterPro" id="IPR020921">
    <property type="entry name" value="Erythronate-4-P_DHase"/>
</dbReference>
<dbReference type="InterPro" id="IPR024531">
    <property type="entry name" value="Erythronate-4-P_DHase_dimer"/>
</dbReference>
<dbReference type="InterPro" id="IPR036291">
    <property type="entry name" value="NAD(P)-bd_dom_sf"/>
</dbReference>
<dbReference type="InterPro" id="IPR038251">
    <property type="entry name" value="PdxB_dimer_sf"/>
</dbReference>
<dbReference type="PANTHER" id="PTHR43761:SF1">
    <property type="entry name" value="D-ISOMER SPECIFIC 2-HYDROXYACID DEHYDROGENASE CATALYTIC DOMAIN-CONTAINING PROTEIN-RELATED"/>
    <property type="match status" value="1"/>
</dbReference>
<dbReference type="PANTHER" id="PTHR43761">
    <property type="entry name" value="D-ISOMER SPECIFIC 2-HYDROXYACID DEHYDROGENASE FAMILY PROTEIN (AFU_ORTHOLOGUE AFUA_1G13630)"/>
    <property type="match status" value="1"/>
</dbReference>
<dbReference type="Pfam" id="PF00389">
    <property type="entry name" value="2-Hacid_dh"/>
    <property type="match status" value="1"/>
</dbReference>
<dbReference type="Pfam" id="PF02826">
    <property type="entry name" value="2-Hacid_dh_C"/>
    <property type="match status" value="1"/>
</dbReference>
<dbReference type="Pfam" id="PF11890">
    <property type="entry name" value="DUF3410"/>
    <property type="match status" value="1"/>
</dbReference>
<dbReference type="SUPFAM" id="SSF52283">
    <property type="entry name" value="Formate/glycerate dehydrogenase catalytic domain-like"/>
    <property type="match status" value="1"/>
</dbReference>
<dbReference type="SUPFAM" id="SSF51735">
    <property type="entry name" value="NAD(P)-binding Rossmann-fold domains"/>
    <property type="match status" value="1"/>
</dbReference>
<dbReference type="PROSITE" id="PS00065">
    <property type="entry name" value="D_2_HYDROXYACID_DH_1"/>
    <property type="match status" value="1"/>
</dbReference>
<feature type="chain" id="PRO_0000297457" description="Erythronate-4-phosphate dehydrogenase">
    <location>
        <begin position="1"/>
        <end position="377"/>
    </location>
</feature>
<feature type="active site" evidence="1">
    <location>
        <position position="237"/>
    </location>
</feature>
<feature type="active site" evidence="1">
    <location>
        <position position="265"/>
    </location>
</feature>
<feature type="active site" description="Proton donor" evidence="1">
    <location>
        <position position="282"/>
    </location>
</feature>
<feature type="binding site" evidence="1">
    <location>
        <position position="59"/>
    </location>
    <ligand>
        <name>substrate</name>
    </ligand>
</feature>
<feature type="binding site" evidence="1">
    <location>
        <position position="81"/>
    </location>
    <ligand>
        <name>substrate</name>
    </ligand>
</feature>
<feature type="binding site" evidence="1">
    <location>
        <position position="162"/>
    </location>
    <ligand>
        <name>NAD(+)</name>
        <dbReference type="ChEBI" id="CHEBI:57540"/>
    </ligand>
</feature>
<feature type="binding site" evidence="1">
    <location>
        <position position="260"/>
    </location>
    <ligand>
        <name>NAD(+)</name>
        <dbReference type="ChEBI" id="CHEBI:57540"/>
    </ligand>
</feature>
<feature type="binding site" evidence="1">
    <location>
        <position position="285"/>
    </location>
    <ligand>
        <name>NAD(+)</name>
        <dbReference type="ChEBI" id="CHEBI:57540"/>
    </ligand>
</feature>
<feature type="binding site" evidence="1">
    <location>
        <position position="286"/>
    </location>
    <ligand>
        <name>substrate</name>
    </ligand>
</feature>
<protein>
    <recommendedName>
        <fullName evidence="1">Erythronate-4-phosphate dehydrogenase</fullName>
        <ecNumber evidence="1">1.1.1.290</ecNumber>
    </recommendedName>
</protein>
<keyword id="KW-0963">Cytoplasm</keyword>
<keyword id="KW-0520">NAD</keyword>
<keyword id="KW-0560">Oxidoreductase</keyword>
<keyword id="KW-0664">Pyridoxine biosynthesis</keyword>
<keyword id="KW-1185">Reference proteome</keyword>
<comment type="function">
    <text evidence="1">Catalyzes the oxidation of erythronate-4-phosphate to 3-hydroxy-2-oxo-4-phosphonooxybutanoate.</text>
</comment>
<comment type="catalytic activity">
    <reaction evidence="1">
        <text>4-phospho-D-erythronate + NAD(+) = (R)-3-hydroxy-2-oxo-4-phosphooxybutanoate + NADH + H(+)</text>
        <dbReference type="Rhea" id="RHEA:18829"/>
        <dbReference type="ChEBI" id="CHEBI:15378"/>
        <dbReference type="ChEBI" id="CHEBI:57540"/>
        <dbReference type="ChEBI" id="CHEBI:57945"/>
        <dbReference type="ChEBI" id="CHEBI:58538"/>
        <dbReference type="ChEBI" id="CHEBI:58766"/>
        <dbReference type="EC" id="1.1.1.290"/>
    </reaction>
</comment>
<comment type="pathway">
    <text evidence="1">Cofactor biosynthesis; pyridoxine 5'-phosphate biosynthesis; pyridoxine 5'-phosphate from D-erythrose 4-phosphate: step 2/5.</text>
</comment>
<comment type="subunit">
    <text evidence="1">Homodimer.</text>
</comment>
<comment type="subcellular location">
    <subcellularLocation>
        <location evidence="1">Cytoplasm</location>
    </subcellularLocation>
</comment>
<comment type="similarity">
    <text evidence="1">Belongs to the D-isomer specific 2-hydroxyacid dehydrogenase family. PdxB subfamily.</text>
</comment>
<comment type="sequence caution" evidence="2">
    <conflict type="erroneous initiation">
        <sequence resource="EMBL-CDS" id="AAZ18142"/>
    </conflict>
</comment>
<gene>
    <name evidence="1" type="primary">pdxB</name>
    <name type="ordered locus">Psyc_0272</name>
</gene>
<proteinExistence type="inferred from homology"/>